<evidence type="ECO:0000255" key="1">
    <source>
        <dbReference type="HAMAP-Rule" id="MF_00148"/>
    </source>
</evidence>
<evidence type="ECO:0000256" key="2">
    <source>
        <dbReference type="SAM" id="MobiDB-lite"/>
    </source>
</evidence>
<name>UNG_BORPA</name>
<dbReference type="EC" id="3.2.2.27" evidence="1"/>
<dbReference type="EMBL" id="BX640423">
    <property type="protein sequence ID" value="CAE39947.1"/>
    <property type="molecule type" value="Genomic_DNA"/>
</dbReference>
<dbReference type="RefSeq" id="WP_003807216.1">
    <property type="nucleotide sequence ID" value="NC_002928.3"/>
</dbReference>
<dbReference type="SMR" id="Q7W1Y7"/>
<dbReference type="GeneID" id="93206437"/>
<dbReference type="KEGG" id="bpa:BPP0206"/>
<dbReference type="HOGENOM" id="CLU_032162_3_0_4"/>
<dbReference type="Proteomes" id="UP000001421">
    <property type="component" value="Chromosome"/>
</dbReference>
<dbReference type="GO" id="GO:0005737">
    <property type="term" value="C:cytoplasm"/>
    <property type="evidence" value="ECO:0007669"/>
    <property type="project" value="UniProtKB-SubCell"/>
</dbReference>
<dbReference type="GO" id="GO:0004844">
    <property type="term" value="F:uracil DNA N-glycosylase activity"/>
    <property type="evidence" value="ECO:0007669"/>
    <property type="project" value="UniProtKB-UniRule"/>
</dbReference>
<dbReference type="GO" id="GO:0097510">
    <property type="term" value="P:base-excision repair, AP site formation via deaminated base removal"/>
    <property type="evidence" value="ECO:0007669"/>
    <property type="project" value="TreeGrafter"/>
</dbReference>
<dbReference type="CDD" id="cd10027">
    <property type="entry name" value="UDG-F1-like"/>
    <property type="match status" value="1"/>
</dbReference>
<dbReference type="Gene3D" id="3.40.470.10">
    <property type="entry name" value="Uracil-DNA glycosylase-like domain"/>
    <property type="match status" value="1"/>
</dbReference>
<dbReference type="HAMAP" id="MF_00148">
    <property type="entry name" value="UDG"/>
    <property type="match status" value="1"/>
</dbReference>
<dbReference type="InterPro" id="IPR002043">
    <property type="entry name" value="UDG_fam1"/>
</dbReference>
<dbReference type="InterPro" id="IPR018085">
    <property type="entry name" value="Ura-DNA_Glyclase_AS"/>
</dbReference>
<dbReference type="InterPro" id="IPR005122">
    <property type="entry name" value="Uracil-DNA_glycosylase-like"/>
</dbReference>
<dbReference type="InterPro" id="IPR036895">
    <property type="entry name" value="Uracil-DNA_glycosylase-like_sf"/>
</dbReference>
<dbReference type="NCBIfam" id="NF003588">
    <property type="entry name" value="PRK05254.1-1"/>
    <property type="match status" value="1"/>
</dbReference>
<dbReference type="NCBIfam" id="NF003589">
    <property type="entry name" value="PRK05254.1-2"/>
    <property type="match status" value="1"/>
</dbReference>
<dbReference type="NCBIfam" id="NF003591">
    <property type="entry name" value="PRK05254.1-4"/>
    <property type="match status" value="1"/>
</dbReference>
<dbReference type="NCBIfam" id="NF003592">
    <property type="entry name" value="PRK05254.1-5"/>
    <property type="match status" value="1"/>
</dbReference>
<dbReference type="NCBIfam" id="TIGR00628">
    <property type="entry name" value="ung"/>
    <property type="match status" value="1"/>
</dbReference>
<dbReference type="PANTHER" id="PTHR11264">
    <property type="entry name" value="URACIL-DNA GLYCOSYLASE"/>
    <property type="match status" value="1"/>
</dbReference>
<dbReference type="PANTHER" id="PTHR11264:SF0">
    <property type="entry name" value="URACIL-DNA GLYCOSYLASE"/>
    <property type="match status" value="1"/>
</dbReference>
<dbReference type="Pfam" id="PF03167">
    <property type="entry name" value="UDG"/>
    <property type="match status" value="1"/>
</dbReference>
<dbReference type="SMART" id="SM00986">
    <property type="entry name" value="UDG"/>
    <property type="match status" value="1"/>
</dbReference>
<dbReference type="SMART" id="SM00987">
    <property type="entry name" value="UreE_C"/>
    <property type="match status" value="1"/>
</dbReference>
<dbReference type="SUPFAM" id="SSF52141">
    <property type="entry name" value="Uracil-DNA glycosylase-like"/>
    <property type="match status" value="1"/>
</dbReference>
<dbReference type="PROSITE" id="PS00130">
    <property type="entry name" value="U_DNA_GLYCOSYLASE"/>
    <property type="match status" value="1"/>
</dbReference>
<protein>
    <recommendedName>
        <fullName evidence="1">Uracil-DNA glycosylase</fullName>
        <shortName evidence="1">UDG</shortName>
        <ecNumber evidence="1">3.2.2.27</ecNumber>
    </recommendedName>
</protein>
<proteinExistence type="inferred from homology"/>
<organism>
    <name type="scientific">Bordetella parapertussis (strain 12822 / ATCC BAA-587 / NCTC 13253)</name>
    <dbReference type="NCBI Taxonomy" id="257311"/>
    <lineage>
        <taxon>Bacteria</taxon>
        <taxon>Pseudomonadati</taxon>
        <taxon>Pseudomonadota</taxon>
        <taxon>Betaproteobacteria</taxon>
        <taxon>Burkholderiales</taxon>
        <taxon>Alcaligenaceae</taxon>
        <taxon>Bordetella</taxon>
    </lineage>
</organism>
<keyword id="KW-0963">Cytoplasm</keyword>
<keyword id="KW-0227">DNA damage</keyword>
<keyword id="KW-0234">DNA repair</keyword>
<keyword id="KW-0378">Hydrolase</keyword>
<accession>Q7W1Y7</accession>
<comment type="function">
    <text evidence="1">Excises uracil residues from the DNA which can arise as a result of misincorporation of dUMP residues by DNA polymerase or due to deamination of cytosine.</text>
</comment>
<comment type="catalytic activity">
    <reaction evidence="1">
        <text>Hydrolyzes single-stranded DNA or mismatched double-stranded DNA and polynucleotides, releasing free uracil.</text>
        <dbReference type="EC" id="3.2.2.27"/>
    </reaction>
</comment>
<comment type="subcellular location">
    <subcellularLocation>
        <location evidence="1">Cytoplasm</location>
    </subcellularLocation>
</comment>
<comment type="similarity">
    <text evidence="1">Belongs to the uracil-DNA glycosylase (UDG) superfamily. UNG family.</text>
</comment>
<feature type="chain" id="PRO_0000176073" description="Uracil-DNA glycosylase">
    <location>
        <begin position="1"/>
        <end position="250"/>
    </location>
</feature>
<feature type="region of interest" description="Disordered" evidence="2">
    <location>
        <begin position="228"/>
        <end position="250"/>
    </location>
</feature>
<feature type="active site" description="Proton acceptor" evidence="1">
    <location>
        <position position="78"/>
    </location>
</feature>
<reference key="1">
    <citation type="journal article" date="2003" name="Nat. Genet.">
        <title>Comparative analysis of the genome sequences of Bordetella pertussis, Bordetella parapertussis and Bordetella bronchiseptica.</title>
        <authorList>
            <person name="Parkhill J."/>
            <person name="Sebaihia M."/>
            <person name="Preston A."/>
            <person name="Murphy L.D."/>
            <person name="Thomson N.R."/>
            <person name="Harris D.E."/>
            <person name="Holden M.T.G."/>
            <person name="Churcher C.M."/>
            <person name="Bentley S.D."/>
            <person name="Mungall K.L."/>
            <person name="Cerdeno-Tarraga A.-M."/>
            <person name="Temple L."/>
            <person name="James K.D."/>
            <person name="Harris B."/>
            <person name="Quail M.A."/>
            <person name="Achtman M."/>
            <person name="Atkin R."/>
            <person name="Baker S."/>
            <person name="Basham D."/>
            <person name="Bason N."/>
            <person name="Cherevach I."/>
            <person name="Chillingworth T."/>
            <person name="Collins M."/>
            <person name="Cronin A."/>
            <person name="Davis P."/>
            <person name="Doggett J."/>
            <person name="Feltwell T."/>
            <person name="Goble A."/>
            <person name="Hamlin N."/>
            <person name="Hauser H."/>
            <person name="Holroyd S."/>
            <person name="Jagels K."/>
            <person name="Leather S."/>
            <person name="Moule S."/>
            <person name="Norberczak H."/>
            <person name="O'Neil S."/>
            <person name="Ormond D."/>
            <person name="Price C."/>
            <person name="Rabbinowitsch E."/>
            <person name="Rutter S."/>
            <person name="Sanders M."/>
            <person name="Saunders D."/>
            <person name="Seeger K."/>
            <person name="Sharp S."/>
            <person name="Simmonds M."/>
            <person name="Skelton J."/>
            <person name="Squares R."/>
            <person name="Squares S."/>
            <person name="Stevens K."/>
            <person name="Unwin L."/>
            <person name="Whitehead S."/>
            <person name="Barrell B.G."/>
            <person name="Maskell D.J."/>
        </authorList>
    </citation>
    <scope>NUCLEOTIDE SEQUENCE [LARGE SCALE GENOMIC DNA]</scope>
    <source>
        <strain>12822 / ATCC BAA-587 / NCTC 13253</strain>
    </source>
</reference>
<gene>
    <name evidence="1" type="primary">ung</name>
    <name type="ordered locus">BPP0206</name>
</gene>
<sequence>MPNDNRLAPAALAAQAAALPAAWRHVLEQPAVARAFASVLGHVEQRLAEGAVVYPATPFRALDQLAPADVRVVILGQDPYHGPGQAQGLAFSVPDDCKCPPSLRNIFNEIAVDYPRPTRHDLSAWTRQGVLLLNTSLTVEDGQPGSHAKRGWETVTDALIAEVARDPSPKVFLLWGAHAQAKQALVPADAGHLVLAANHPSPLSARRPPVPFVGCGHFRQTNAWLQQRGQKPVDWSGEQNNASRQGEFAL</sequence>